<name>GLB_TUBTU</name>
<evidence type="ECO:0000255" key="1">
    <source>
        <dbReference type="PROSITE-ProRule" id="PRU00238"/>
    </source>
</evidence>
<evidence type="ECO:0000305" key="2"/>
<sequence length="141" mass="15922">ECDALQRFKVKHQWAEAFGTSHHRLDFGLKLWNSIFRDAPEIRGLFKRVDGDNAYSAEFEAHAERVLGGLDMTISLLDDQAAFDAQLAHLKSQHAERNIKADYYGVFVNELLAVLPDYLGTKLDFKAWSECLGVITGAIHD</sequence>
<reference key="1">
    <citation type="journal article" date="1990" name="Eur. J. Biochem.">
        <title>Amino acid sequence of the monomer subunit of the giant extracellular hemoglobin of the aquatic oligochaete, Tubifex tubifex.</title>
        <authorList>
            <person name="Stern M.S."/>
            <person name="Vinogradov S.N."/>
            <person name="Sharma P.K."/>
            <person name="Ereifej K."/>
            <person name="Walz D.A."/>
        </authorList>
    </citation>
    <scope>PROTEIN SEQUENCE</scope>
</reference>
<keyword id="KW-0903">Direct protein sequencing</keyword>
<keyword id="KW-1015">Disulfide bond</keyword>
<keyword id="KW-0349">Heme</keyword>
<keyword id="KW-0408">Iron</keyword>
<keyword id="KW-0479">Metal-binding</keyword>
<keyword id="KW-0561">Oxygen transport</keyword>
<keyword id="KW-0964">Secreted</keyword>
<keyword id="KW-0813">Transport</keyword>
<feature type="chain" id="PRO_0000052511" description="Globin, extracellular monomeric">
    <location>
        <begin position="1"/>
        <end position="141"/>
    </location>
</feature>
<feature type="domain" description="Globin" evidence="1">
    <location>
        <begin position="1"/>
        <end position="141"/>
    </location>
</feature>
<feature type="binding site" description="proximal binding residue" evidence="1">
    <location>
        <position position="94"/>
    </location>
    <ligand>
        <name>heme b</name>
        <dbReference type="ChEBI" id="CHEBI:60344"/>
    </ligand>
    <ligandPart>
        <name>Fe</name>
        <dbReference type="ChEBI" id="CHEBI:18248"/>
    </ligandPart>
</feature>
<feature type="disulfide bond" evidence="2">
    <location>
        <begin position="2"/>
        <end position="131"/>
    </location>
</feature>
<protein>
    <recommendedName>
        <fullName>Globin, extracellular monomeric</fullName>
    </recommendedName>
</protein>
<accession>P18202</accession>
<comment type="subunit">
    <text>The giant hemoglobins of worms are formed of a monomeric subunit and a disulfide-bonded trimer. This subunit is monomeric.</text>
</comment>
<comment type="subcellular location">
    <subcellularLocation>
        <location>Secreted</location>
    </subcellularLocation>
</comment>
<comment type="similarity">
    <text evidence="1">Belongs to the globin family.</text>
</comment>
<dbReference type="PIR" id="S13836">
    <property type="entry name" value="S13836"/>
</dbReference>
<dbReference type="SMR" id="P18202"/>
<dbReference type="GO" id="GO:0005576">
    <property type="term" value="C:extracellular region"/>
    <property type="evidence" value="ECO:0007669"/>
    <property type="project" value="UniProtKB-SubCell"/>
</dbReference>
<dbReference type="GO" id="GO:0005833">
    <property type="term" value="C:hemoglobin complex"/>
    <property type="evidence" value="ECO:0007669"/>
    <property type="project" value="InterPro"/>
</dbReference>
<dbReference type="GO" id="GO:0020037">
    <property type="term" value="F:heme binding"/>
    <property type="evidence" value="ECO:0007669"/>
    <property type="project" value="InterPro"/>
</dbReference>
<dbReference type="GO" id="GO:0005506">
    <property type="term" value="F:iron ion binding"/>
    <property type="evidence" value="ECO:0007669"/>
    <property type="project" value="InterPro"/>
</dbReference>
<dbReference type="GO" id="GO:0019825">
    <property type="term" value="F:oxygen binding"/>
    <property type="evidence" value="ECO:0007669"/>
    <property type="project" value="InterPro"/>
</dbReference>
<dbReference type="GO" id="GO:0005344">
    <property type="term" value="F:oxygen carrier activity"/>
    <property type="evidence" value="ECO:0007669"/>
    <property type="project" value="UniProtKB-KW"/>
</dbReference>
<dbReference type="CDD" id="cd01040">
    <property type="entry name" value="Mb-like"/>
    <property type="match status" value="1"/>
</dbReference>
<dbReference type="Gene3D" id="1.10.490.10">
    <property type="entry name" value="Globins"/>
    <property type="match status" value="1"/>
</dbReference>
<dbReference type="InterPro" id="IPR002336">
    <property type="entry name" value="Erythrocruorin"/>
</dbReference>
<dbReference type="InterPro" id="IPR000971">
    <property type="entry name" value="Globin"/>
</dbReference>
<dbReference type="InterPro" id="IPR009050">
    <property type="entry name" value="Globin-like_sf"/>
</dbReference>
<dbReference type="InterPro" id="IPR012292">
    <property type="entry name" value="Globin/Proto"/>
</dbReference>
<dbReference type="InterPro" id="IPR014610">
    <property type="entry name" value="Haemoglobin_extracell"/>
</dbReference>
<dbReference type="InterPro" id="IPR044399">
    <property type="entry name" value="Mb-like_M"/>
</dbReference>
<dbReference type="Pfam" id="PF00042">
    <property type="entry name" value="Globin"/>
    <property type="match status" value="1"/>
</dbReference>
<dbReference type="PIRSF" id="PIRSF036517">
    <property type="entry name" value="Ext_hemo"/>
    <property type="match status" value="1"/>
</dbReference>
<dbReference type="PRINTS" id="PR00611">
    <property type="entry name" value="ERYTHCRUORIN"/>
</dbReference>
<dbReference type="SUPFAM" id="SSF46458">
    <property type="entry name" value="Globin-like"/>
    <property type="match status" value="1"/>
</dbReference>
<dbReference type="PROSITE" id="PS01033">
    <property type="entry name" value="GLOBIN"/>
    <property type="match status" value="1"/>
</dbReference>
<proteinExistence type="evidence at protein level"/>
<organism>
    <name type="scientific">Tubifex tubifex</name>
    <name type="common">Sludge worm</name>
    <name type="synonym">Lumbricus tubifex</name>
    <dbReference type="NCBI Taxonomy" id="6386"/>
    <lineage>
        <taxon>Eukaryota</taxon>
        <taxon>Metazoa</taxon>
        <taxon>Spiralia</taxon>
        <taxon>Lophotrochozoa</taxon>
        <taxon>Annelida</taxon>
        <taxon>Clitellata</taxon>
        <taxon>Oligochaeta</taxon>
        <taxon>Tubificida</taxon>
        <taxon>Tubificina</taxon>
        <taxon>Naididae</taxon>
        <taxon>Tubificinae</taxon>
        <taxon>Tubifex</taxon>
    </lineage>
</organism>